<keyword id="KW-0678">Repressor</keyword>
<keyword id="KW-0687">Ribonucleoprotein</keyword>
<keyword id="KW-0689">Ribosomal protein</keyword>
<keyword id="KW-0694">RNA-binding</keyword>
<keyword id="KW-0699">rRNA-binding</keyword>
<keyword id="KW-0810">Translation regulation</keyword>
<keyword id="KW-0820">tRNA-binding</keyword>
<comment type="function">
    <text evidence="1">Binds directly to 23S rRNA. The L1 stalk is quite mobile in the ribosome, and is involved in E site tRNA release.</text>
</comment>
<comment type="function">
    <text evidence="1">Protein L1 is also a translational repressor protein, it controls the translation of the L11 operon by binding to its mRNA.</text>
</comment>
<comment type="subunit">
    <text evidence="1">Part of the 50S ribosomal subunit.</text>
</comment>
<comment type="similarity">
    <text evidence="1">Belongs to the universal ribosomal protein uL1 family.</text>
</comment>
<accession>A9KD42</accession>
<feature type="chain" id="PRO_1000086280" description="Large ribosomal subunit protein uL1">
    <location>
        <begin position="1"/>
        <end position="232"/>
    </location>
</feature>
<protein>
    <recommendedName>
        <fullName evidence="1">Large ribosomal subunit protein uL1</fullName>
    </recommendedName>
    <alternativeName>
        <fullName evidence="2">50S ribosomal protein L1</fullName>
    </alternativeName>
</protein>
<evidence type="ECO:0000255" key="1">
    <source>
        <dbReference type="HAMAP-Rule" id="MF_01318"/>
    </source>
</evidence>
<evidence type="ECO:0000305" key="2"/>
<name>RL1_COXBN</name>
<organism>
    <name type="scientific">Coxiella burnetii (strain Dugway 5J108-111)</name>
    <dbReference type="NCBI Taxonomy" id="434922"/>
    <lineage>
        <taxon>Bacteria</taxon>
        <taxon>Pseudomonadati</taxon>
        <taxon>Pseudomonadota</taxon>
        <taxon>Gammaproteobacteria</taxon>
        <taxon>Legionellales</taxon>
        <taxon>Coxiellaceae</taxon>
        <taxon>Coxiella</taxon>
    </lineage>
</organism>
<gene>
    <name evidence="1" type="primary">rplA</name>
    <name type="ordered locus">CBUD_1865</name>
</gene>
<dbReference type="EMBL" id="CP000733">
    <property type="protein sequence ID" value="ABS76565.1"/>
    <property type="molecule type" value="Genomic_DNA"/>
</dbReference>
<dbReference type="RefSeq" id="WP_005771615.1">
    <property type="nucleotide sequence ID" value="NC_009727.1"/>
</dbReference>
<dbReference type="SMR" id="A9KD42"/>
<dbReference type="KEGG" id="cbd:CBUD_1865"/>
<dbReference type="HOGENOM" id="CLU_062853_0_0_6"/>
<dbReference type="Proteomes" id="UP000008555">
    <property type="component" value="Chromosome"/>
</dbReference>
<dbReference type="GO" id="GO:0022625">
    <property type="term" value="C:cytosolic large ribosomal subunit"/>
    <property type="evidence" value="ECO:0007669"/>
    <property type="project" value="TreeGrafter"/>
</dbReference>
<dbReference type="GO" id="GO:0019843">
    <property type="term" value="F:rRNA binding"/>
    <property type="evidence" value="ECO:0007669"/>
    <property type="project" value="UniProtKB-UniRule"/>
</dbReference>
<dbReference type="GO" id="GO:0003735">
    <property type="term" value="F:structural constituent of ribosome"/>
    <property type="evidence" value="ECO:0007669"/>
    <property type="project" value="InterPro"/>
</dbReference>
<dbReference type="GO" id="GO:0000049">
    <property type="term" value="F:tRNA binding"/>
    <property type="evidence" value="ECO:0007669"/>
    <property type="project" value="UniProtKB-KW"/>
</dbReference>
<dbReference type="GO" id="GO:0006417">
    <property type="term" value="P:regulation of translation"/>
    <property type="evidence" value="ECO:0007669"/>
    <property type="project" value="UniProtKB-KW"/>
</dbReference>
<dbReference type="GO" id="GO:0006412">
    <property type="term" value="P:translation"/>
    <property type="evidence" value="ECO:0007669"/>
    <property type="project" value="UniProtKB-UniRule"/>
</dbReference>
<dbReference type="CDD" id="cd00403">
    <property type="entry name" value="Ribosomal_L1"/>
    <property type="match status" value="1"/>
</dbReference>
<dbReference type="FunFam" id="3.40.50.790:FF:000001">
    <property type="entry name" value="50S ribosomal protein L1"/>
    <property type="match status" value="1"/>
</dbReference>
<dbReference type="Gene3D" id="3.30.190.20">
    <property type="match status" value="1"/>
</dbReference>
<dbReference type="Gene3D" id="3.40.50.790">
    <property type="match status" value="1"/>
</dbReference>
<dbReference type="HAMAP" id="MF_01318_B">
    <property type="entry name" value="Ribosomal_uL1_B"/>
    <property type="match status" value="1"/>
</dbReference>
<dbReference type="InterPro" id="IPR005878">
    <property type="entry name" value="Ribosom_uL1_bac-type"/>
</dbReference>
<dbReference type="InterPro" id="IPR002143">
    <property type="entry name" value="Ribosomal_uL1"/>
</dbReference>
<dbReference type="InterPro" id="IPR023674">
    <property type="entry name" value="Ribosomal_uL1-like"/>
</dbReference>
<dbReference type="InterPro" id="IPR028364">
    <property type="entry name" value="Ribosomal_uL1/biogenesis"/>
</dbReference>
<dbReference type="InterPro" id="IPR016095">
    <property type="entry name" value="Ribosomal_uL1_3-a/b-sand"/>
</dbReference>
<dbReference type="InterPro" id="IPR023673">
    <property type="entry name" value="Ribosomal_uL1_CS"/>
</dbReference>
<dbReference type="NCBIfam" id="TIGR01169">
    <property type="entry name" value="rplA_bact"/>
    <property type="match status" value="1"/>
</dbReference>
<dbReference type="PANTHER" id="PTHR36427">
    <property type="entry name" value="54S RIBOSOMAL PROTEIN L1, MITOCHONDRIAL"/>
    <property type="match status" value="1"/>
</dbReference>
<dbReference type="PANTHER" id="PTHR36427:SF3">
    <property type="entry name" value="LARGE RIBOSOMAL SUBUNIT PROTEIN UL1M"/>
    <property type="match status" value="1"/>
</dbReference>
<dbReference type="Pfam" id="PF00687">
    <property type="entry name" value="Ribosomal_L1"/>
    <property type="match status" value="1"/>
</dbReference>
<dbReference type="PIRSF" id="PIRSF002155">
    <property type="entry name" value="Ribosomal_L1"/>
    <property type="match status" value="1"/>
</dbReference>
<dbReference type="SUPFAM" id="SSF56808">
    <property type="entry name" value="Ribosomal protein L1"/>
    <property type="match status" value="1"/>
</dbReference>
<dbReference type="PROSITE" id="PS01199">
    <property type="entry name" value="RIBOSOMAL_L1"/>
    <property type="match status" value="1"/>
</dbReference>
<reference key="1">
    <citation type="journal article" date="2009" name="Infect. Immun.">
        <title>Comparative genomics reveal extensive transposon-mediated genomic plasticity and diversity among potential effector proteins within the genus Coxiella.</title>
        <authorList>
            <person name="Beare P.A."/>
            <person name="Unsworth N."/>
            <person name="Andoh M."/>
            <person name="Voth D.E."/>
            <person name="Omsland A."/>
            <person name="Gilk S.D."/>
            <person name="Williams K.P."/>
            <person name="Sobral B.W."/>
            <person name="Kupko J.J. III"/>
            <person name="Porcella S.F."/>
            <person name="Samuel J.E."/>
            <person name="Heinzen R.A."/>
        </authorList>
    </citation>
    <scope>NUCLEOTIDE SEQUENCE [LARGE SCALE GENOMIC DNA]</scope>
    <source>
        <strain>Dugway 5J108-111</strain>
    </source>
</reference>
<sequence length="232" mass="24695">MAAKLTKKRKTLAEKVQRDKAYPLSEAIKLIKECAKAKFNESIDVAINLGIDSRKSDQAIRGATVLPHGSGRTVKVAVFAQGDNVEKAKAAGADIVGLDDLAERIQGGDIDFDVVIATPETMRVVGKLGQVLGPRGLMPNPKVGTVTTDVASAVKNAKQGQVRYRTDKNGIIHCTIGKVNFEEKALEENFLALLNDIKKAKPSAAKGTYLKKLTLSSTMGPGIAIDRTTVGA</sequence>
<proteinExistence type="inferred from homology"/>